<proteinExistence type="inferred from homology"/>
<comment type="similarity">
    <text evidence="1">Belongs to the UPF0225 family.</text>
</comment>
<reference key="1">
    <citation type="journal article" date="2003" name="Lancet">
        <title>Genome sequence of Vibrio parahaemolyticus: a pathogenic mechanism distinct from that of V. cholerae.</title>
        <authorList>
            <person name="Makino K."/>
            <person name="Oshima K."/>
            <person name="Kurokawa K."/>
            <person name="Yokoyama K."/>
            <person name="Uda T."/>
            <person name="Tagomori K."/>
            <person name="Iijima Y."/>
            <person name="Najima M."/>
            <person name="Nakano M."/>
            <person name="Yamashita A."/>
            <person name="Kubota Y."/>
            <person name="Kimura S."/>
            <person name="Yasunaga T."/>
            <person name="Honda T."/>
            <person name="Shinagawa H."/>
            <person name="Hattori M."/>
            <person name="Iida T."/>
        </authorList>
    </citation>
    <scope>NUCLEOTIDE SEQUENCE [LARGE SCALE GENOMIC DNA]</scope>
    <source>
        <strain>RIMD 2210633</strain>
    </source>
</reference>
<feature type="chain" id="PRO_0000071819" description="UPF0225 protein VP1145">
    <location>
        <begin position="1"/>
        <end position="167"/>
    </location>
</feature>
<name>Y1145_VIBPA</name>
<protein>
    <recommendedName>
        <fullName evidence="1">UPF0225 protein VP1145</fullName>
    </recommendedName>
</protein>
<dbReference type="EMBL" id="BA000031">
    <property type="protein sequence ID" value="BAC59408.1"/>
    <property type="molecule type" value="Genomic_DNA"/>
</dbReference>
<dbReference type="RefSeq" id="NP_797524.1">
    <property type="nucleotide sequence ID" value="NC_004603.1"/>
</dbReference>
<dbReference type="RefSeq" id="WP_005459984.1">
    <property type="nucleotide sequence ID" value="NC_004603.1"/>
</dbReference>
<dbReference type="SMR" id="Q87QK4"/>
<dbReference type="GeneID" id="1188650"/>
<dbReference type="KEGG" id="vpa:VP1145"/>
<dbReference type="PATRIC" id="fig|223926.6.peg.1087"/>
<dbReference type="eggNOG" id="COG3012">
    <property type="taxonomic scope" value="Bacteria"/>
</dbReference>
<dbReference type="HOGENOM" id="CLU_099590_0_0_6"/>
<dbReference type="Proteomes" id="UP000002493">
    <property type="component" value="Chromosome 1"/>
</dbReference>
<dbReference type="Gene3D" id="3.10.450.50">
    <property type="match status" value="1"/>
</dbReference>
<dbReference type="HAMAP" id="MF_00612">
    <property type="entry name" value="UPF0225"/>
    <property type="match status" value="1"/>
</dbReference>
<dbReference type="InterPro" id="IPR032710">
    <property type="entry name" value="NTF2-like_dom_sf"/>
</dbReference>
<dbReference type="InterPro" id="IPR004027">
    <property type="entry name" value="SEC_C_motif"/>
</dbReference>
<dbReference type="InterPro" id="IPR023006">
    <property type="entry name" value="UPF0225"/>
</dbReference>
<dbReference type="InterPro" id="IPR048469">
    <property type="entry name" value="YchJ-like_M"/>
</dbReference>
<dbReference type="NCBIfam" id="NF002449">
    <property type="entry name" value="PRK01617.1"/>
    <property type="match status" value="1"/>
</dbReference>
<dbReference type="NCBIfam" id="NF002592">
    <property type="entry name" value="PRK02250.1"/>
    <property type="match status" value="1"/>
</dbReference>
<dbReference type="PANTHER" id="PTHR33747:SF1">
    <property type="entry name" value="ADENYLATE CYCLASE-ASSOCIATED CAP C-TERMINAL DOMAIN-CONTAINING PROTEIN"/>
    <property type="match status" value="1"/>
</dbReference>
<dbReference type="PANTHER" id="PTHR33747">
    <property type="entry name" value="UPF0225 PROTEIN SCO1677"/>
    <property type="match status" value="1"/>
</dbReference>
<dbReference type="Pfam" id="PF02810">
    <property type="entry name" value="SEC-C"/>
    <property type="match status" value="2"/>
</dbReference>
<dbReference type="Pfam" id="PF17775">
    <property type="entry name" value="YchJ_M-like"/>
    <property type="match status" value="1"/>
</dbReference>
<dbReference type="SUPFAM" id="SSF54427">
    <property type="entry name" value="NTF2-like"/>
    <property type="match status" value="1"/>
</dbReference>
<dbReference type="SUPFAM" id="SSF103642">
    <property type="entry name" value="Sec-C motif"/>
    <property type="match status" value="1"/>
</dbReference>
<gene>
    <name type="ordered locus">VP1145</name>
</gene>
<evidence type="ECO:0000255" key="1">
    <source>
        <dbReference type="HAMAP-Rule" id="MF_00612"/>
    </source>
</evidence>
<sequence>MASSCPCGANRTYQQCCEIAHNNHADVKTPEQLMRSRYSAHVLGLVDYVVKTYHPSCNAEEQREGIAQSIDSDWCKLEVVKAEAGSHENEGFVEFNAYFNEDGQRYCLSERSRFVKENGLWYYIDGTFPEEESEQDPRLNQSISSLKVGRNDPCICGSGKKFKKCCG</sequence>
<accession>Q87QK4</accession>
<organism>
    <name type="scientific">Vibrio parahaemolyticus serotype O3:K6 (strain RIMD 2210633)</name>
    <dbReference type="NCBI Taxonomy" id="223926"/>
    <lineage>
        <taxon>Bacteria</taxon>
        <taxon>Pseudomonadati</taxon>
        <taxon>Pseudomonadota</taxon>
        <taxon>Gammaproteobacteria</taxon>
        <taxon>Vibrionales</taxon>
        <taxon>Vibrionaceae</taxon>
        <taxon>Vibrio</taxon>
    </lineage>
</organism>